<dbReference type="EMBL" id="X07850">
    <property type="protein sequence ID" value="CAA30697.1"/>
    <property type="molecule type" value="Genomic_DNA"/>
</dbReference>
<dbReference type="EMBL" id="X07899">
    <property type="protein sequence ID" value="CAA30738.1"/>
    <property type="molecule type" value="Genomic_DNA"/>
</dbReference>
<dbReference type="EMBL" id="U14003">
    <property type="protein sequence ID" value="AAA97041.1"/>
    <property type="molecule type" value="Genomic_DNA"/>
</dbReference>
<dbReference type="EMBL" id="U00096">
    <property type="protein sequence ID" value="AAC77102.1"/>
    <property type="molecule type" value="Genomic_DNA"/>
</dbReference>
<dbReference type="EMBL" id="AP009048">
    <property type="protein sequence ID" value="BAE78144.1"/>
    <property type="molecule type" value="Genomic_DNA"/>
</dbReference>
<dbReference type="PIR" id="S03931">
    <property type="entry name" value="BVECGS"/>
</dbReference>
<dbReference type="RefSeq" id="NP_418566.1">
    <property type="nucleotide sequence ID" value="NC_000913.3"/>
</dbReference>
<dbReference type="RefSeq" id="WP_001026276.1">
    <property type="nucleotide sequence ID" value="NZ_STEB01000014.1"/>
</dbReference>
<dbReference type="PDB" id="1AON">
    <property type="method" value="X-ray"/>
    <property type="resolution" value="3.00 A"/>
    <property type="chains" value="O/P/Q/R/S/T/U=1-97"/>
</dbReference>
<dbReference type="PDB" id="1EGS">
    <property type="method" value="NMR"/>
    <property type="chains" value="A=19-27"/>
</dbReference>
<dbReference type="PDB" id="1GRU">
    <property type="method" value="EM"/>
    <property type="resolution" value="12.50 A"/>
    <property type="chains" value="O/P/Q/R/S/T/U=1-97"/>
</dbReference>
<dbReference type="PDB" id="1PCQ">
    <property type="method" value="X-ray"/>
    <property type="resolution" value="2.81 A"/>
    <property type="chains" value="O/P/Q/R/S/T/U=1-97"/>
</dbReference>
<dbReference type="PDB" id="1PF9">
    <property type="method" value="X-ray"/>
    <property type="resolution" value="2.99 A"/>
    <property type="chains" value="O/P/Q/R/S/T/U=1-97"/>
</dbReference>
<dbReference type="PDB" id="1SVT">
    <property type="method" value="X-ray"/>
    <property type="resolution" value="2.81 A"/>
    <property type="chains" value="O/P/Q/R/S/T/U=1-97"/>
</dbReference>
<dbReference type="PDB" id="1SX4">
    <property type="method" value="X-ray"/>
    <property type="resolution" value="3.00 A"/>
    <property type="chains" value="O/P/Q/R/S/T/U=1-97"/>
</dbReference>
<dbReference type="PDB" id="2C7C">
    <property type="method" value="EM"/>
    <property type="resolution" value="7.70 A"/>
    <property type="chains" value="O/P/Q/R/S/T/U=1-97"/>
</dbReference>
<dbReference type="PDB" id="2C7D">
    <property type="method" value="EM"/>
    <property type="resolution" value="8.70 A"/>
    <property type="chains" value="O/P/Q/R/S/T/U=1-97"/>
</dbReference>
<dbReference type="PDB" id="3WVL">
    <property type="method" value="X-ray"/>
    <property type="resolution" value="3.79 A"/>
    <property type="chains" value="O/P/Q/R/S/T/U/V/W/X/Y/Z/a/b=1-97"/>
</dbReference>
<dbReference type="PDB" id="3ZPZ">
    <property type="method" value="EM"/>
    <property type="resolution" value="8.90 A"/>
    <property type="chains" value="O/P/Q/R/S/T/U=1-97"/>
</dbReference>
<dbReference type="PDB" id="3ZQ0">
    <property type="method" value="EM"/>
    <property type="resolution" value="9.20 A"/>
    <property type="chains" value="O/P/Q/R/S/T/U=1-97"/>
</dbReference>
<dbReference type="PDB" id="3ZQ1">
    <property type="method" value="EM"/>
    <property type="resolution" value="15.90 A"/>
    <property type="chains" value="O/P/Q/R/S/T/U=1-97"/>
</dbReference>
<dbReference type="PDB" id="5OPX">
    <property type="method" value="X-ray"/>
    <property type="resolution" value="3.64 A"/>
    <property type="chains" value="1/2/O/P/Q/R/S/T/U/V/W/X/Y/Z=1-97"/>
</dbReference>
<dbReference type="PDB" id="7PBJ">
    <property type="method" value="EM"/>
    <property type="resolution" value="3.40 A"/>
    <property type="chains" value="Af/Am/At/Ba/Bh/Bo/Bv=1-97"/>
</dbReference>
<dbReference type="PDB" id="7PBX">
    <property type="method" value="EM"/>
    <property type="resolution" value="3.43 A"/>
    <property type="chains" value="Af/Al/Ar/Ax/Bd/Bj/Bp=1-97"/>
</dbReference>
<dbReference type="PDB" id="7VWX">
    <property type="method" value="EM"/>
    <property type="resolution" value="7.60 A"/>
    <property type="chains" value="1/2/O/P/Q/R/S/T/U/V/W/X/Y/Z=1-97"/>
</dbReference>
<dbReference type="PDB" id="8BA9">
    <property type="method" value="EM"/>
    <property type="resolution" value="3.70 A"/>
    <property type="chains" value="O/P/Q/R/S/T/U=1-97"/>
</dbReference>
<dbReference type="PDB" id="8BAA">
    <property type="method" value="EM"/>
    <property type="resolution" value="4.20 A"/>
    <property type="chains" value="O/P/Q/R/S/T/U=1-97"/>
</dbReference>
<dbReference type="PDB" id="8BKZ">
    <property type="method" value="EM"/>
    <property type="resolution" value="2.30 A"/>
    <property type="chains" value="AA/B/CA/D/F/H/J/L/N/P/R/T/W/Y=2-97"/>
</dbReference>
<dbReference type="PDB" id="8BM0">
    <property type="method" value="EM"/>
    <property type="resolution" value="3.40 A"/>
    <property type="chains" value="B/E/J/M/P/S/W=2-97"/>
</dbReference>
<dbReference type="PDB" id="8BM1">
    <property type="method" value="EM"/>
    <property type="resolution" value="2.70 A"/>
    <property type="chains" value="B/E/J/M/P/S/W=2-97"/>
</dbReference>
<dbReference type="PDB" id="8BMO">
    <property type="method" value="EM"/>
    <property type="resolution" value="3.40 A"/>
    <property type="chains" value="D/G/K/N/Q/T/W=2-97"/>
</dbReference>
<dbReference type="PDB" id="8BMT">
    <property type="method" value="EM"/>
    <property type="resolution" value="2.50 A"/>
    <property type="chains" value="AA/B/CA/D/F/H/K/M/O/Q/S/V/W/Y=2-97"/>
</dbReference>
<dbReference type="PDB" id="8P4M">
    <property type="method" value="EM"/>
    <property type="resolution" value="2.50 A"/>
    <property type="chains" value="O/P/Q/R/S/T/U=1-97"/>
</dbReference>
<dbReference type="PDB" id="8P4N">
    <property type="method" value="EM"/>
    <property type="resolution" value="2.90 A"/>
    <property type="chains" value="O/P/Q/R/S/T/U=1-97"/>
</dbReference>
<dbReference type="PDB" id="8P4O">
    <property type="method" value="EM"/>
    <property type="resolution" value="3.04 A"/>
    <property type="chains" value="O/P/Q/R/S/T/U=1-97"/>
</dbReference>
<dbReference type="PDB" id="8QXS">
    <property type="method" value="EM"/>
    <property type="resolution" value="3.12 A"/>
    <property type="chains" value="O/P/Q/R/S/T/U=1-97"/>
</dbReference>
<dbReference type="PDB" id="8QXT">
    <property type="method" value="EM"/>
    <property type="resolution" value="2.90 A"/>
    <property type="chains" value="O/P/Q/R/S/T/U=1-97"/>
</dbReference>
<dbReference type="PDB" id="8QXU">
    <property type="method" value="EM"/>
    <property type="resolution" value="12.00 A"/>
    <property type="chains" value="O/P/Q/R/S/T/U=1-97"/>
</dbReference>
<dbReference type="PDB" id="8QXV">
    <property type="method" value="EM"/>
    <property type="resolution" value="13.60 A"/>
    <property type="chains" value="O/P/Q/R/S/T/U=1-97"/>
</dbReference>
<dbReference type="PDBsum" id="1AON"/>
<dbReference type="PDBsum" id="1EGS"/>
<dbReference type="PDBsum" id="1GRU"/>
<dbReference type="PDBsum" id="1PCQ"/>
<dbReference type="PDBsum" id="1PF9"/>
<dbReference type="PDBsum" id="1SVT"/>
<dbReference type="PDBsum" id="1SX4"/>
<dbReference type="PDBsum" id="2C7C"/>
<dbReference type="PDBsum" id="2C7D"/>
<dbReference type="PDBsum" id="3WVL"/>
<dbReference type="PDBsum" id="3ZPZ"/>
<dbReference type="PDBsum" id="3ZQ0"/>
<dbReference type="PDBsum" id="3ZQ1"/>
<dbReference type="PDBsum" id="5OPX"/>
<dbReference type="PDBsum" id="7PBJ"/>
<dbReference type="PDBsum" id="7PBX"/>
<dbReference type="PDBsum" id="7VWX"/>
<dbReference type="PDBsum" id="8BA9"/>
<dbReference type="PDBsum" id="8BAA"/>
<dbReference type="PDBsum" id="8BKZ"/>
<dbReference type="PDBsum" id="8BM0"/>
<dbReference type="PDBsum" id="8BM1"/>
<dbReference type="PDBsum" id="8BMO"/>
<dbReference type="PDBsum" id="8BMT"/>
<dbReference type="PDBsum" id="8P4M"/>
<dbReference type="PDBsum" id="8P4N"/>
<dbReference type="PDBsum" id="8P4O"/>
<dbReference type="PDBsum" id="8QXS"/>
<dbReference type="PDBsum" id="8QXT"/>
<dbReference type="PDBsum" id="8QXU"/>
<dbReference type="PDBsum" id="8QXV"/>
<dbReference type="EMDB" id="EMD-1046"/>
<dbReference type="EMDB" id="EMD-1180"/>
<dbReference type="EMDB" id="EMD-1181"/>
<dbReference type="EMDB" id="EMD-13293"/>
<dbReference type="EMDB" id="EMD-13308"/>
<dbReference type="EMDB" id="EMD-15942"/>
<dbReference type="EMDB" id="EMD-15944"/>
<dbReference type="EMDB" id="EMD-16099"/>
<dbReference type="EMDB" id="EMD-16116"/>
<dbReference type="EMDB" id="EMD-16117"/>
<dbReference type="EMDB" id="EMD-16119"/>
<dbReference type="EMDB" id="EMD-16125"/>
<dbReference type="EMDB" id="EMD-17418"/>
<dbReference type="EMDB" id="EMD-17420"/>
<dbReference type="EMDB" id="EMD-17421"/>
<dbReference type="EMDB" id="EMD-17423"/>
<dbReference type="EMDB" id="EMD-17424"/>
<dbReference type="EMDB" id="EMD-17534"/>
<dbReference type="EMDB" id="EMD-17535"/>
<dbReference type="EMDB" id="EMD-17559"/>
<dbReference type="EMDB" id="EMD-17560"/>
<dbReference type="EMDB" id="EMD-17563"/>
<dbReference type="EMDB" id="EMD-17564"/>
<dbReference type="EMDB" id="EMD-17565"/>
<dbReference type="EMDB" id="EMD-17566"/>
<dbReference type="EMDB" id="EMD-17567"/>
<dbReference type="EMDB" id="EMD-17568"/>
<dbReference type="EMDB" id="EMD-17569"/>
<dbReference type="EMDB" id="EMD-17570"/>
<dbReference type="EMDB" id="EMD-17571"/>
<dbReference type="EMDB" id="EMD-17572"/>
<dbReference type="EMDB" id="EMD-17573"/>
<dbReference type="EMDB" id="EMD-18735"/>
<dbReference type="EMDB" id="EMD-18736"/>
<dbReference type="EMDB" id="EMD-18737"/>
<dbReference type="EMDB" id="EMD-18738"/>
<dbReference type="EMDB" id="EMD-2325"/>
<dbReference type="EMDB" id="EMD-2326"/>
<dbReference type="EMDB" id="EMD-2327"/>
<dbReference type="EMDB" id="EMD-32164"/>
<dbReference type="SMR" id="P0A6F9"/>
<dbReference type="BioGRID" id="4262198">
    <property type="interactions" value="229"/>
</dbReference>
<dbReference type="ComplexPortal" id="CPX-2113">
    <property type="entry name" value="GroEL-GroES complex"/>
</dbReference>
<dbReference type="DIP" id="DIP-9835N"/>
<dbReference type="FunCoup" id="P0A6F9">
    <property type="interactions" value="888"/>
</dbReference>
<dbReference type="IntAct" id="P0A6F9">
    <property type="interactions" value="41"/>
</dbReference>
<dbReference type="MINT" id="P0A6F9"/>
<dbReference type="STRING" id="511145.b4142"/>
<dbReference type="jPOST" id="P0A6F9"/>
<dbReference type="PaxDb" id="511145-b4142"/>
<dbReference type="EnsemblBacteria" id="AAC77102">
    <property type="protein sequence ID" value="AAC77102"/>
    <property type="gene ID" value="b4142"/>
</dbReference>
<dbReference type="GeneID" id="948655"/>
<dbReference type="KEGG" id="ecj:JW4102"/>
<dbReference type="KEGG" id="eco:b4142"/>
<dbReference type="KEGG" id="ecoc:C3026_22385"/>
<dbReference type="PATRIC" id="fig|1411691.4.peg.2558"/>
<dbReference type="EchoBASE" id="EB0595"/>
<dbReference type="eggNOG" id="COG0234">
    <property type="taxonomic scope" value="Bacteria"/>
</dbReference>
<dbReference type="HOGENOM" id="CLU_132825_1_1_6"/>
<dbReference type="InParanoid" id="P0A6F9"/>
<dbReference type="OMA" id="EDFLIMR"/>
<dbReference type="OrthoDB" id="9806791at2"/>
<dbReference type="PhylomeDB" id="P0A6F9"/>
<dbReference type="BioCyc" id="EcoCyc:EG10600-MONOMER"/>
<dbReference type="BioCyc" id="MetaCyc:EG10600-MONOMER"/>
<dbReference type="SABIO-RK" id="P0A6F9"/>
<dbReference type="EvolutionaryTrace" id="P0A6F9"/>
<dbReference type="PRO" id="PR:P0A6F9"/>
<dbReference type="Proteomes" id="UP000000625">
    <property type="component" value="Chromosome"/>
</dbReference>
<dbReference type="GO" id="GO:0005829">
    <property type="term" value="C:cytosol"/>
    <property type="evidence" value="ECO:0000314"/>
    <property type="project" value="EcoCyc"/>
</dbReference>
<dbReference type="GO" id="GO:1990220">
    <property type="term" value="C:GroEL-GroES complex"/>
    <property type="evidence" value="ECO:0000314"/>
    <property type="project" value="EcoCyc"/>
</dbReference>
<dbReference type="GO" id="GO:0005524">
    <property type="term" value="F:ATP binding"/>
    <property type="evidence" value="ECO:0007669"/>
    <property type="project" value="InterPro"/>
</dbReference>
<dbReference type="GO" id="GO:0042802">
    <property type="term" value="F:identical protein binding"/>
    <property type="evidence" value="ECO:0000314"/>
    <property type="project" value="EcoCyc"/>
</dbReference>
<dbReference type="GO" id="GO:0046872">
    <property type="term" value="F:metal ion binding"/>
    <property type="evidence" value="ECO:0000318"/>
    <property type="project" value="GO_Central"/>
</dbReference>
<dbReference type="GO" id="GO:0044183">
    <property type="term" value="F:protein folding chaperone"/>
    <property type="evidence" value="ECO:0007669"/>
    <property type="project" value="InterPro"/>
</dbReference>
<dbReference type="GO" id="GO:0051087">
    <property type="term" value="F:protein-folding chaperone binding"/>
    <property type="evidence" value="ECO:0000318"/>
    <property type="project" value="GO_Central"/>
</dbReference>
<dbReference type="GO" id="GO:0051082">
    <property type="term" value="F:unfolded protein binding"/>
    <property type="evidence" value="ECO:0000318"/>
    <property type="project" value="GO_Central"/>
</dbReference>
<dbReference type="GO" id="GO:0051085">
    <property type="term" value="P:chaperone cofactor-dependent protein refolding"/>
    <property type="evidence" value="ECO:0000314"/>
    <property type="project" value="EcoCyc"/>
</dbReference>
<dbReference type="GO" id="GO:0006457">
    <property type="term" value="P:protein folding"/>
    <property type="evidence" value="ECO:0000314"/>
    <property type="project" value="CACAO"/>
</dbReference>
<dbReference type="GO" id="GO:0009408">
    <property type="term" value="P:response to heat"/>
    <property type="evidence" value="ECO:0000270"/>
    <property type="project" value="EcoliWiki"/>
</dbReference>
<dbReference type="GO" id="GO:0019068">
    <property type="term" value="P:virion assembly"/>
    <property type="evidence" value="ECO:0000315"/>
    <property type="project" value="EcoliWiki"/>
</dbReference>
<dbReference type="CDD" id="cd00320">
    <property type="entry name" value="cpn10"/>
    <property type="match status" value="1"/>
</dbReference>
<dbReference type="FunFam" id="2.30.33.40:FF:000001">
    <property type="entry name" value="10 kDa chaperonin"/>
    <property type="match status" value="1"/>
</dbReference>
<dbReference type="Gene3D" id="2.30.33.40">
    <property type="entry name" value="GroES chaperonin"/>
    <property type="match status" value="1"/>
</dbReference>
<dbReference type="HAMAP" id="MF_00580">
    <property type="entry name" value="CH10"/>
    <property type="match status" value="1"/>
</dbReference>
<dbReference type="InterPro" id="IPR020818">
    <property type="entry name" value="Chaperonin_GroES"/>
</dbReference>
<dbReference type="InterPro" id="IPR037124">
    <property type="entry name" value="Chaperonin_GroES_sf"/>
</dbReference>
<dbReference type="InterPro" id="IPR018369">
    <property type="entry name" value="Chaprnonin_Cpn10_CS"/>
</dbReference>
<dbReference type="InterPro" id="IPR011032">
    <property type="entry name" value="GroES-like_sf"/>
</dbReference>
<dbReference type="NCBIfam" id="NF001526">
    <property type="entry name" value="PRK00364.1-1"/>
    <property type="match status" value="1"/>
</dbReference>
<dbReference type="NCBIfam" id="NF001527">
    <property type="entry name" value="PRK00364.1-2"/>
    <property type="match status" value="1"/>
</dbReference>
<dbReference type="NCBIfam" id="NF001531">
    <property type="entry name" value="PRK00364.2-2"/>
    <property type="match status" value="1"/>
</dbReference>
<dbReference type="PANTHER" id="PTHR10772">
    <property type="entry name" value="10 KDA HEAT SHOCK PROTEIN"/>
    <property type="match status" value="1"/>
</dbReference>
<dbReference type="PANTHER" id="PTHR10772:SF58">
    <property type="entry name" value="CO-CHAPERONIN GROES"/>
    <property type="match status" value="1"/>
</dbReference>
<dbReference type="Pfam" id="PF00166">
    <property type="entry name" value="Cpn10"/>
    <property type="match status" value="1"/>
</dbReference>
<dbReference type="PRINTS" id="PR00297">
    <property type="entry name" value="CHAPERONIN10"/>
</dbReference>
<dbReference type="SMART" id="SM00883">
    <property type="entry name" value="Cpn10"/>
    <property type="match status" value="1"/>
</dbReference>
<dbReference type="SUPFAM" id="SSF50129">
    <property type="entry name" value="GroES-like"/>
    <property type="match status" value="1"/>
</dbReference>
<dbReference type="PROSITE" id="PS00681">
    <property type="entry name" value="CHAPERONINS_CPN10"/>
    <property type="match status" value="1"/>
</dbReference>
<organism>
    <name type="scientific">Escherichia coli (strain K12)</name>
    <dbReference type="NCBI Taxonomy" id="83333"/>
    <lineage>
        <taxon>Bacteria</taxon>
        <taxon>Pseudomonadati</taxon>
        <taxon>Pseudomonadota</taxon>
        <taxon>Gammaproteobacteria</taxon>
        <taxon>Enterobacterales</taxon>
        <taxon>Enterobacteriaceae</taxon>
        <taxon>Escherichia</taxon>
    </lineage>
</organism>
<name>CH10_ECOLI</name>
<proteinExistence type="evidence at protein level"/>
<feature type="chain" id="PRO_0000174746" description="Co-chaperonin GroES">
    <location>
        <begin position="1"/>
        <end position="97"/>
    </location>
</feature>
<feature type="modified residue" description="N6-succinyllysine" evidence="9">
    <location>
        <position position="34"/>
    </location>
</feature>
<feature type="sequence conflict" description="In Ref. 2; CAA30738." evidence="25" ref="2">
    <original>S</original>
    <variation>N</variation>
    <location>
        <position position="89"/>
    </location>
</feature>
<feature type="strand" evidence="37">
    <location>
        <begin position="3"/>
        <end position="5"/>
    </location>
</feature>
<feature type="strand" evidence="37">
    <location>
        <begin position="9"/>
        <end position="14"/>
    </location>
</feature>
<feature type="strand" evidence="37">
    <location>
        <begin position="22"/>
        <end position="24"/>
    </location>
</feature>
<feature type="helix" evidence="36">
    <location>
        <begin position="29"/>
        <end position="31"/>
    </location>
</feature>
<feature type="strand" evidence="37">
    <location>
        <begin position="36"/>
        <end position="43"/>
    </location>
</feature>
<feature type="strand" evidence="35">
    <location>
        <begin position="45"/>
        <end position="47"/>
    </location>
</feature>
<feature type="strand" evidence="37">
    <location>
        <begin position="50"/>
        <end position="52"/>
    </location>
</feature>
<feature type="strand" evidence="37">
    <location>
        <begin position="64"/>
        <end position="67"/>
    </location>
</feature>
<feature type="strand" evidence="38">
    <location>
        <begin position="70"/>
        <end position="72"/>
    </location>
</feature>
<feature type="strand" evidence="37">
    <location>
        <begin position="74"/>
        <end position="78"/>
    </location>
</feature>
<feature type="strand" evidence="37">
    <location>
        <begin position="81"/>
        <end position="87"/>
    </location>
</feature>
<feature type="helix" evidence="37">
    <location>
        <begin position="88"/>
        <end position="90"/>
    </location>
</feature>
<feature type="strand" evidence="37">
    <location>
        <begin position="91"/>
        <end position="95"/>
    </location>
</feature>
<comment type="function">
    <text evidence="2 3 4 5 6 7 8 11 13 15 22">Together with the chaperonin GroEL, plays an essential role in assisting protein folding (PubMed:10532860, PubMed:16751100, PubMed:1676490, PubMed:18418386, PubMed:18987317, PubMed:20603018, PubMed:24816391, PubMed:2573517, PubMed:2897629). The GroEL-GroES system forms a nano-cage that allows encapsulation of the non-native substrate proteins and provides a physical environment optimized to promote and accelerate protein folding, probably by preventing aggregation and by entropically destabilizing folding intermediates (PubMed:16751100, PubMed:18418386, PubMed:18987317, PubMed:20603018, PubMed:24816391). GroES binds to the apical surface of the GroEL ring, thereby capping the opening of the GroEL channel (PubMed:9285585). Regulates the ATPase activity of GroEL (PubMed:1361169, PubMed:1676490).</text>
</comment>
<comment type="function">
    <text evidence="16 17">(Microbial infection) Essential for the assembly of several bacteriophages.</text>
</comment>
<comment type="activity regulation">
    <text evidence="2">Activity of the GroEL-GroES chaperonin complex requires Mg-ATP.</text>
</comment>
<comment type="subunit">
    <text evidence="3 12 14 18 19 20 21 22">Heptamer of 7 subunits arranged in a ring (PubMed:1361169, PubMed:9285585). Interacts with the chaperonin GroEL (PubMed:1361169, PubMed:25174333, PubMed:7638600, PubMed:7638601, PubMed:8618836, PubMed:8663256, PubMed:9285585). Can form asymmetrical complexes, composed of one GroEL and one GroES, and symmetrical complexes, formed between one GroEL and two GroES oligomers (PubMed:1361169, PubMed:25174333, PubMed:7638600, PubMed:7638601, PubMed:8618836, PubMed:8663256). The asymmetrical complex is the functional unit (PubMed:25912285, PubMed:7638600, PubMed:7638601). It was suggested that the symmetric heterooligomer may represent a transient intermediate in the chaperonin protein folding cycle (PubMed:8618836, PubMed:8663256). Another study shows that the symmetric heterooligomers are substantially populated only in the presence of proteins that cannot be folded by the chaperonin (PubMed:25912285).</text>
</comment>
<comment type="interaction">
    <interactant intactId="EBI-369169">
        <id>P0A6F9</id>
    </interactant>
    <interactant intactId="EBI-543750">
        <id>P0A6F5</id>
        <label>groEL</label>
    </interactant>
    <organismsDiffer>false</organismsDiffer>
    <experiments>31</experiments>
</comment>
<comment type="interaction">
    <interactant intactId="EBI-369169">
        <id>P0A6F9</id>
    </interactant>
    <interactant intactId="EBI-369169">
        <id>P0A6F9</id>
        <label>groES</label>
    </interactant>
    <organismsDiffer>false</organismsDiffer>
    <experiments>2</experiments>
</comment>
<comment type="subcellular location">
    <subcellularLocation>
        <location evidence="1 10">Cytoplasm</location>
    </subcellularLocation>
    <text>Exclusively localized in foci, usually near 1 cell pole in mid-to-late exponential phase; polar localization depends on the minCDE operon. Foci form near midcell.</text>
</comment>
<comment type="similarity">
    <text evidence="1 25">Belongs to the GroES chaperonin family.</text>
</comment>
<protein>
    <recommendedName>
        <fullName evidence="1 25">Co-chaperonin GroES</fullName>
    </recommendedName>
    <alternativeName>
        <fullName evidence="1 25">10 kDa chaperonin</fullName>
    </alternativeName>
    <alternativeName>
        <fullName evidence="1 23">Chaperonin-10</fullName>
        <shortName evidence="1 23">Cpn10</shortName>
    </alternativeName>
</protein>
<accession>P0A6F9</accession>
<accession>P05380</accession>
<accession>Q2M6G2</accession>
<evidence type="ECO:0000255" key="1">
    <source>
        <dbReference type="HAMAP-Rule" id="MF_00580"/>
    </source>
</evidence>
<evidence type="ECO:0000269" key="2">
    <source>
    </source>
</evidence>
<evidence type="ECO:0000269" key="3">
    <source>
    </source>
</evidence>
<evidence type="ECO:0000269" key="4">
    <source>
    </source>
</evidence>
<evidence type="ECO:0000269" key="5">
    <source>
    </source>
</evidence>
<evidence type="ECO:0000269" key="6">
    <source>
    </source>
</evidence>
<evidence type="ECO:0000269" key="7">
    <source>
    </source>
</evidence>
<evidence type="ECO:0000269" key="8">
    <source>
    </source>
</evidence>
<evidence type="ECO:0000269" key="9">
    <source>
    </source>
</evidence>
<evidence type="ECO:0000269" key="10">
    <source>
    </source>
</evidence>
<evidence type="ECO:0000269" key="11">
    <source>
    </source>
</evidence>
<evidence type="ECO:0000269" key="12">
    <source>
    </source>
</evidence>
<evidence type="ECO:0000269" key="13">
    <source>
    </source>
</evidence>
<evidence type="ECO:0000269" key="14">
    <source>
    </source>
</evidence>
<evidence type="ECO:0000269" key="15">
    <source>
    </source>
</evidence>
<evidence type="ECO:0000269" key="16">
    <source>
    </source>
</evidence>
<evidence type="ECO:0000269" key="17">
    <source>
    </source>
</evidence>
<evidence type="ECO:0000269" key="18">
    <source>
    </source>
</evidence>
<evidence type="ECO:0000269" key="19">
    <source>
    </source>
</evidence>
<evidence type="ECO:0000269" key="20">
    <source>
    </source>
</evidence>
<evidence type="ECO:0000269" key="21">
    <source>
    </source>
</evidence>
<evidence type="ECO:0000269" key="22">
    <source>
    </source>
</evidence>
<evidence type="ECO:0000303" key="23">
    <source>
    </source>
</evidence>
<evidence type="ECO:0000303" key="24">
    <source>
    </source>
</evidence>
<evidence type="ECO:0000305" key="25"/>
<evidence type="ECO:0007744" key="26">
    <source>
        <dbReference type="PDB" id="1AON"/>
    </source>
</evidence>
<evidence type="ECO:0007744" key="27">
    <source>
        <dbReference type="PDB" id="1EGS"/>
    </source>
</evidence>
<evidence type="ECO:0007744" key="28">
    <source>
        <dbReference type="PDB" id="1PCQ"/>
    </source>
</evidence>
<evidence type="ECO:0007744" key="29">
    <source>
        <dbReference type="PDB" id="1PF9"/>
    </source>
</evidence>
<evidence type="ECO:0007744" key="30">
    <source>
        <dbReference type="PDB" id="3WVL"/>
    </source>
</evidence>
<evidence type="ECO:0007744" key="31">
    <source>
        <dbReference type="PDB" id="3ZPZ"/>
    </source>
</evidence>
<evidence type="ECO:0007744" key="32">
    <source>
        <dbReference type="PDB" id="3ZQ0"/>
    </source>
</evidence>
<evidence type="ECO:0007744" key="33">
    <source>
        <dbReference type="PDB" id="3ZQ1"/>
    </source>
</evidence>
<evidence type="ECO:0007744" key="34">
    <source>
        <dbReference type="PDB" id="5OPX"/>
    </source>
</evidence>
<evidence type="ECO:0007829" key="35">
    <source>
        <dbReference type="PDB" id="1PCQ"/>
    </source>
</evidence>
<evidence type="ECO:0007829" key="36">
    <source>
        <dbReference type="PDB" id="8BM1"/>
    </source>
</evidence>
<evidence type="ECO:0007829" key="37">
    <source>
        <dbReference type="PDB" id="8P4M"/>
    </source>
</evidence>
<evidence type="ECO:0007829" key="38">
    <source>
        <dbReference type="PDB" id="8P4N"/>
    </source>
</evidence>
<keyword id="KW-0002">3D-structure</keyword>
<keyword id="KW-0143">Chaperone</keyword>
<keyword id="KW-0963">Cytoplasm</keyword>
<keyword id="KW-0903">Direct protein sequencing</keyword>
<keyword id="KW-1185">Reference proteome</keyword>
<sequence length="97" mass="10387">MNIRPLHDRVIVKRKEVETKSAGGIVLTGSAAAKSTRGEVLAVGNGRILENGEVKPLDVKVGDIVIFNDGYGVKSEKIDNEEVLIMSESDILAIVEA</sequence>
<reference key="1">
    <citation type="journal article" date="1988" name="Nature">
        <title>Homologous plant and bacterial proteins chaperone oligomeric protein assembly.</title>
        <authorList>
            <person name="Hemmingsen S.M."/>
            <person name="Woolford C."/>
            <person name="van der Vies S.M."/>
            <person name="Tilly K."/>
            <person name="Dennis D.T."/>
            <person name="Georgopoulos C."/>
            <person name="Hendrix R.W."/>
            <person name="Ellis R.J."/>
        </authorList>
    </citation>
    <scope>NUCLEOTIDE SEQUENCE [GENOMIC DNA]</scope>
    <scope>FUNCTION</scope>
</reference>
<reference key="2">
    <citation type="journal article" date="1988" name="J. Mol. Biol.">
        <title>Control of cell division by sex factor F in Escherichia coli. III. Participation of the groES (mopB) gene of the host bacteria.</title>
        <authorList>
            <person name="Miki T."/>
            <person name="Orita T."/>
            <person name="Furuno M."/>
            <person name="Horiuchi T."/>
        </authorList>
    </citation>
    <scope>NUCLEOTIDE SEQUENCE [GENOMIC DNA]</scope>
</reference>
<reference key="3">
    <citation type="journal article" date="1995" name="Nucleic Acids Res.">
        <title>Analysis of the Escherichia coli genome VI: DNA sequence of the region from 92.8 through 100 minutes.</title>
        <authorList>
            <person name="Burland V.D."/>
            <person name="Plunkett G. III"/>
            <person name="Sofia H.J."/>
            <person name="Daniels D.L."/>
            <person name="Blattner F.R."/>
        </authorList>
    </citation>
    <scope>NUCLEOTIDE SEQUENCE [LARGE SCALE GENOMIC DNA]</scope>
    <source>
        <strain>K12 / MG1655 / ATCC 47076</strain>
    </source>
</reference>
<reference key="4">
    <citation type="journal article" date="1997" name="Science">
        <title>The complete genome sequence of Escherichia coli K-12.</title>
        <authorList>
            <person name="Blattner F.R."/>
            <person name="Plunkett G. III"/>
            <person name="Bloch C.A."/>
            <person name="Perna N.T."/>
            <person name="Burland V."/>
            <person name="Riley M."/>
            <person name="Collado-Vides J."/>
            <person name="Glasner J.D."/>
            <person name="Rode C.K."/>
            <person name="Mayhew G.F."/>
            <person name="Gregor J."/>
            <person name="Davis N.W."/>
            <person name="Kirkpatrick H.A."/>
            <person name="Goeden M.A."/>
            <person name="Rose D.J."/>
            <person name="Mau B."/>
            <person name="Shao Y."/>
        </authorList>
    </citation>
    <scope>NUCLEOTIDE SEQUENCE [LARGE SCALE GENOMIC DNA]</scope>
    <source>
        <strain>K12 / MG1655 / ATCC 47076</strain>
    </source>
</reference>
<reference key="5">
    <citation type="journal article" date="2006" name="Mol. Syst. Biol.">
        <title>Highly accurate genome sequences of Escherichia coli K-12 strains MG1655 and W3110.</title>
        <authorList>
            <person name="Hayashi K."/>
            <person name="Morooka N."/>
            <person name="Yamamoto Y."/>
            <person name="Fujita K."/>
            <person name="Isono K."/>
            <person name="Choi S."/>
            <person name="Ohtsubo E."/>
            <person name="Baba T."/>
            <person name="Wanner B.L."/>
            <person name="Mori H."/>
            <person name="Horiuchi T."/>
        </authorList>
    </citation>
    <scope>NUCLEOTIDE SEQUENCE [LARGE SCALE GENOMIC DNA]</scope>
    <source>
        <strain>K12 / W3110 / ATCC 27325 / DSM 5911</strain>
    </source>
</reference>
<reference key="6">
    <citation type="journal article" date="1993" name="Nature">
        <title>Identification of nucleotide-binding regions in the chaperonin proteins GroEL and GroES.</title>
        <authorList>
            <person name="Martin J."/>
            <person name="Geromanos S."/>
            <person name="Tempst P."/>
            <person name="Hartl F.U."/>
        </authorList>
    </citation>
    <scope>NUCLEOTIDE SEQUENCE [GENOMIC DNA] OF 61-74</scope>
</reference>
<reference key="7">
    <citation type="journal article" date="1993" name="Proc. Natl. Acad. Sci. U.S.A.">
        <title>Identifying proteins from two-dimensional gels by molecular mass searching of peptide fragments in protein sequence databases.</title>
        <authorList>
            <person name="Henzel W.J."/>
            <person name="Billeci T.M."/>
            <person name="Stults J.T."/>
            <person name="Wong S.C."/>
            <person name="Grimley C."/>
            <person name="Watanabe C."/>
        </authorList>
    </citation>
    <scope>PROTEIN SEQUENCE OF 1-18</scope>
</reference>
<reference key="8">
    <citation type="submission" date="1994-09" db="UniProtKB">
        <authorList>
            <person name="Pasquali C."/>
            <person name="Sanchez J.-C."/>
            <person name="Ravier F."/>
            <person name="Golaz O."/>
            <person name="Hughes G.J."/>
            <person name="Frutiger S."/>
            <person name="Paquet N."/>
            <person name="Wilkins M."/>
            <person name="Appel R.D."/>
            <person name="Bairoch A."/>
            <person name="Hochstrasser D.F."/>
        </authorList>
    </citation>
    <scope>PROTEIN SEQUENCE OF 1-11</scope>
    <source>
        <strain>K12 / W3110 / ATCC 27325 / DSM 5911</strain>
    </source>
</reference>
<reference key="9">
    <citation type="journal article" date="1997" name="Electrophoresis">
        <title>Comparing the predicted and observed properties of proteins encoded in the genome of Escherichia coli K-12.</title>
        <authorList>
            <person name="Link A.J."/>
            <person name="Robison K."/>
            <person name="Church G.M."/>
        </authorList>
    </citation>
    <scope>PROTEIN SEQUENCE OF 1-12</scope>
    <source>
        <strain>K12 / EMG2</strain>
    </source>
</reference>
<reference key="10">
    <citation type="journal article" date="1998" name="J. Mol. Biol.">
        <title>Protein identification with N and C-terminal sequence tags in proteome projects.</title>
        <authorList>
            <person name="Wilkins M.R."/>
            <person name="Gasteiger E."/>
            <person name="Tonella L."/>
            <person name="Ou K."/>
            <person name="Tyler M."/>
            <person name="Sanchez J.-C."/>
            <person name="Gooley A.A."/>
            <person name="Walsh B.J."/>
            <person name="Bairoch A."/>
            <person name="Appel R.D."/>
            <person name="Williams K.L."/>
            <person name="Hochstrasser D.F."/>
        </authorList>
    </citation>
    <scope>PROTEIN SEQUENCE OF 1-4</scope>
    <source>
        <strain>K12 / W3110 / ATCC 27325 / DSM 5911</strain>
    </source>
</reference>
<reference key="11">
    <citation type="journal article" date="1979" name="J. Mol. Biol.">
        <title>Purification and properties of groE, a host protein involved in bacteriophage assembly.</title>
        <authorList>
            <person name="Hendrix R.W."/>
        </authorList>
    </citation>
    <scope>FUNCTION (MICROBIAL INFECTION)</scope>
</reference>
<reference key="12">
    <citation type="journal article" date="1981" name="Proc. Natl. Acad. Sci. U.S.A.">
        <title>Identification of a second Escherichia coli groE gene whose product is necessary for bacteriophage morphogenesis.</title>
        <authorList>
            <person name="Tilly K."/>
            <person name="Murialdo H."/>
            <person name="Georgopoulos C."/>
        </authorList>
    </citation>
    <scope>FUNCTION (MICROBIAL INFECTION)</scope>
    <scope>GENE NAME</scope>
</reference>
<reference key="13">
    <citation type="journal article" date="1989" name="EMBO J.">
        <title>Effects of mutations in heat-shock genes groES and groEL on protein export in Escherichia coli.</title>
        <authorList>
            <person name="Kusukawa N."/>
            <person name="Yura T."/>
            <person name="Ueguchi C."/>
            <person name="Akiyama Y."/>
            <person name="Ito K."/>
        </authorList>
    </citation>
    <scope>FUNCTION</scope>
</reference>
<reference key="14">
    <citation type="journal article" date="1989" name="Nature">
        <title>Reconstitution of active dimeric ribulose bisphosphate carboxylase from an unfoleded state depends on two chaperonin proteins and Mg-ATP.</title>
        <authorList>
            <person name="Goloubinoff P."/>
            <person name="Christeller J.T."/>
            <person name="Gatenby A.A."/>
            <person name="Lorimer G.H."/>
        </authorList>
    </citation>
    <scope>FUNCTION</scope>
    <scope>ACTIVITY REGULATION</scope>
</reference>
<reference key="15">
    <citation type="journal article" date="1991" name="Nature">
        <title>Chaperonin-mediated protein folding at the surface of groEL through a 'molten globule'-like intermediate.</title>
        <authorList>
            <person name="Martin J."/>
            <person name="Langer T."/>
            <person name="Boteva R."/>
            <person name="Schramel A."/>
            <person name="Horwich A.L."/>
            <person name="Hartl F.U."/>
        </authorList>
    </citation>
    <scope>FUNCTION</scope>
</reference>
<reference key="16">
    <citation type="journal article" date="1992" name="EMBO J.">
        <title>Chaperonin-mediated protein folding: GroES binds to one end of the GroEL cylinder, which accommodates the protein substrate within its central cavity.</title>
        <authorList>
            <person name="Langer T."/>
            <person name="Pfeifer G."/>
            <person name="Martin J."/>
            <person name="Baumeister W."/>
            <person name="Hartl F.U."/>
        </authorList>
    </citation>
    <scope>FUNCTION</scope>
    <scope>SUBUNIT</scope>
    <scope>INTERACTION WITH GROEL</scope>
</reference>
<reference key="17">
    <citation type="journal article" date="1995" name="Proc. Natl. Acad. Sci. U.S.A.">
        <title>The protein-folding activity of chaperonins correlates with the symmetric GroEL14(GroES7)2 heterooligomer.</title>
        <authorList>
            <person name="Azem A."/>
            <person name="Diamant S."/>
            <person name="Kessel M."/>
            <person name="Weiss C."/>
            <person name="Goloubinoff P."/>
        </authorList>
    </citation>
    <scope>SUBUNIT</scope>
    <scope>INTERACTION WITH GROEL</scope>
</reference>
<reference key="18">
    <citation type="journal article" date="1995" name="Science">
        <title>Functional significance of symmetrical versus asymmetrical GroEL-GroES chaperonin complexes.</title>
        <authorList>
            <person name="Engel A."/>
            <person name="Hayer-Hartl M.K."/>
            <person name="Goldie K.N."/>
            <person name="Pfeifer G."/>
            <person name="Hegerl R."/>
            <person name="Mueller S."/>
            <person name="da Silva A.C."/>
            <person name="Baumeister W."/>
            <person name="Hartl F.U."/>
        </authorList>
    </citation>
    <scope>SUBUNIT</scope>
    <scope>INTERACTION WITH GROEL</scope>
</reference>
<reference key="19">
    <citation type="journal article" date="1995" name="Science">
        <title>Asymmetrical interaction of GroEL and GroES in the ATPase cycle of assisted protein folding.</title>
        <authorList>
            <person name="Hayer-Hartl M.K."/>
            <person name="Martin J."/>
            <person name="Hartl F.U."/>
        </authorList>
    </citation>
    <scope>SUBUNIT</scope>
    <scope>INTERACTION WITH GROEL</scope>
</reference>
<reference key="20">
    <citation type="journal article" date="1996" name="J. Biol. Chem.">
        <title>Fluorescence detection of symmetric GroEL14(GroES7)2 heterooligomers involved in protein release during the chaperonin cycle.</title>
        <authorList>
            <person name="Toeroek Z."/>
            <person name="Vigh L."/>
            <person name="Goloubinoff P."/>
        </authorList>
    </citation>
    <scope>SUBUNIT</scope>
    <scope>INTERACTION WITH GROEL</scope>
</reference>
<reference key="21">
    <citation type="journal article" date="1997" name="Electrophoresis">
        <title>Escherichia coli proteome analysis using the gene-protein database.</title>
        <authorList>
            <person name="VanBogelen R.A."/>
            <person name="Abshire K.Z."/>
            <person name="Moldover B."/>
            <person name="Olson E.R."/>
            <person name="Neidhardt F.C."/>
        </authorList>
    </citation>
    <scope>IDENTIFICATION BY 2D-GEL</scope>
</reference>
<reference key="22">
    <citation type="journal article" date="2006" name="Cell">
        <title>Structural features of the GroEL-GroES nano-cage required for rapid folding of encapsulated protein.</title>
        <authorList>
            <person name="Tang Y.C."/>
            <person name="Chang H.C."/>
            <person name="Roeben A."/>
            <person name="Wischnewski D."/>
            <person name="Wischnewski N."/>
            <person name="Kerner M.J."/>
            <person name="Hartl F.U."/>
            <person name="Hayer-Hartl M."/>
        </authorList>
    </citation>
    <scope>FUNCTION</scope>
</reference>
<reference key="23">
    <citation type="journal article" date="2008" name="EMBO J.">
        <title>Essential role of the chaperonin folding compartment in vivo.</title>
        <authorList>
            <person name="Tang Y.C."/>
            <person name="Chang H.C."/>
            <person name="Chakraborty K."/>
            <person name="Hartl F.U."/>
            <person name="Hayer-Hartl M."/>
        </authorList>
    </citation>
    <scope>FUNCTION</scope>
</reference>
<reference key="24">
    <citation type="journal article" date="2008" name="Proc. Natl. Acad. Sci. U.S.A.">
        <title>Chaperonin chamber accelerates protein folding through passive action of preventing aggregation.</title>
        <authorList>
            <person name="Apetri A.C."/>
            <person name="Horwich A.L."/>
        </authorList>
    </citation>
    <scope>FUNCTION</scope>
</reference>
<reference key="25">
    <citation type="journal article" date="2010" name="Cell">
        <title>Chaperonin-catalyzed rescue of kinetically trapped states in protein folding.</title>
        <authorList>
            <person name="Chakraborty K."/>
            <person name="Chatila M."/>
            <person name="Sinha J."/>
            <person name="Shi Q."/>
            <person name="Poschner B.C."/>
            <person name="Sikor M."/>
            <person name="Jiang G."/>
            <person name="Lamb D.C."/>
            <person name="Hartl F.U."/>
            <person name="Hayer-Hartl M."/>
        </authorList>
    </citation>
    <scope>FUNCTION</scope>
</reference>
<reference key="26">
    <citation type="journal article" date="2011" name="Nat. Chem. Biol.">
        <title>Identification of lysine succinylation as a new post-translational modification.</title>
        <authorList>
            <person name="Zhang Z."/>
            <person name="Tan M."/>
            <person name="Xie Z."/>
            <person name="Dai L."/>
            <person name="Chen Y."/>
            <person name="Zhao Y."/>
        </authorList>
    </citation>
    <scope>SUCCINYLATION AT LYS-34</scope>
    <source>
        <strain>K12</strain>
    </source>
</reference>
<reference key="27">
    <citation type="journal article" date="2012" name="Mol. Microbiol.">
        <title>Isolation and identification of new inner membrane-associated proteins that localize to cell poles in Escherichia coli.</title>
        <authorList>
            <person name="Li G."/>
            <person name="Young K.D."/>
        </authorList>
    </citation>
    <scope>SUBCELLULAR LOCATION</scope>
    <source>
        <strain>K12 / MG1655 / ATCC 47076</strain>
    </source>
</reference>
<reference key="28">
    <citation type="journal article" date="2014" name="J. Mol. Biol.">
        <title>Active cage mechanism of chaperonin-assisted protein folding demonstrated at single-molecule level.</title>
        <authorList>
            <person name="Gupta A.J."/>
            <person name="Haldar S."/>
            <person name="Milicic G."/>
            <person name="Hartl F.U."/>
            <person name="Hayer-Hartl M."/>
        </authorList>
    </citation>
    <scope>FUNCTION</scope>
</reference>
<reference key="29">
    <citation type="journal article" date="2015" name="J. Mol. Biol.">
        <title>Chaperonin-assisted protein folding: relative population of asymmetric and symmetric GroEL:GroES complexes.</title>
        <authorList>
            <person name="Haldar S."/>
            <person name="Gupta A.J."/>
            <person name="Yan X."/>
            <person name="Milicic G."/>
            <person name="Hartl F.U."/>
            <person name="Hayer-Hartl M."/>
        </authorList>
    </citation>
    <scope>SUBUNIT</scope>
</reference>
<reference key="30">
    <citation type="journal article" date="2009" name="Q. Rev. Biophys.">
        <title>Chaperonin-mediated protein folding: using a central cavity to kinetically assist polypeptide chain folding.</title>
        <authorList>
            <person name="Horwich A.L."/>
            <person name="Fenton W.A."/>
        </authorList>
    </citation>
    <scope>REVIEW</scope>
</reference>
<reference key="31">
    <citation type="journal article" date="2016" name="Trends Biochem. Sci.">
        <title>The GroEL-GroES chaperonin machine: a nano-cage for protein folding.</title>
        <authorList>
            <person name="Hayer-Hartl M."/>
            <person name="Bracher A."/>
            <person name="Hartl F.U."/>
        </authorList>
    </citation>
    <scope>REVIEW</scope>
</reference>
<reference key="32">
    <citation type="journal article" date="2020" name="FEBS Lett.">
        <title>Recent advances in understanding catalysis of protein folding by molecular chaperones.</title>
        <authorList>
            <person name="Balchin D."/>
            <person name="Hayer-Hartl M."/>
            <person name="Hartl F.U."/>
        </authorList>
    </citation>
    <scope>REVIEW</scope>
</reference>
<reference key="33">
    <citation type="journal article" date="1996" name="Nature">
        <title>The crystal structure of the GroES co-chaperonin at 2.8-A resolution.</title>
        <authorList>
            <person name="Hunt J.F."/>
            <person name="Weaver A.J."/>
            <person name="Landry S.J."/>
            <person name="Gierasch L."/>
            <person name="Deisenhofer J."/>
        </authorList>
    </citation>
    <scope>X-RAY CRYSTALLOGRAPHY (2.7 ANGSTROMS)</scope>
</reference>
<reference evidence="26" key="34">
    <citation type="journal article" date="1997" name="Nature">
        <title>The crystal structure of the asymmetric GroEL-GroES-(ADP)7 chaperonin complex.</title>
        <authorList>
            <person name="Xu Z."/>
            <person name="Horwich A.L."/>
            <person name="Sigler P.B."/>
        </authorList>
    </citation>
    <scope>X-RAY CRYSTALLOGRAPHY (3.0 ANGSTROMS) IN COMPLEX WITH GROEL</scope>
    <scope>FUNCTION</scope>
    <scope>SUBUNIT</scope>
</reference>
<reference evidence="27" key="35">
    <citation type="journal article" date="1996" name="Proc. Natl. Acad. Sci. U.S.A.">
        <title>Interplay of structure and disorder in cochaperonin mobile loops.</title>
        <authorList>
            <person name="Landry S.J."/>
            <person name="Taher A."/>
            <person name="Georgopoulos C."/>
            <person name="van der Vies S.M."/>
        </authorList>
    </citation>
    <scope>STRUCTURE BY NMR OF 19-27</scope>
</reference>
<reference evidence="28 29" key="36">
    <citation type="journal article" date="2003" name="EMBO J.">
        <title>Role of the gamma-phosphate of ATP in triggering protein folding by GroEL-GroES: function, structure and energetics.</title>
        <authorList>
            <person name="Chaudhry C."/>
            <person name="Farr G.W."/>
            <person name="Todd M.J."/>
            <person name="Rye H.S."/>
            <person name="Brunger A.T."/>
            <person name="Adams P.D."/>
            <person name="Horwich A.L."/>
            <person name="Sigler P.B."/>
        </authorList>
    </citation>
    <scope>X-RAY CRYSTALLOGRAPHY (2.81 ANGSTROMS) IN COMPLEX WITH GROEL</scope>
</reference>
<reference evidence="31 32 33" key="37">
    <citation type="journal article" date="2013" name="Cell">
        <title>Visualizing GroEL/ES in the act of encapsulating a folding protein.</title>
        <authorList>
            <person name="Chen D.H."/>
            <person name="Madan D."/>
            <person name="Weaver J."/>
            <person name="Lin Z."/>
            <person name="Schroder G.F."/>
            <person name="Chiu W."/>
            <person name="Rye H.S."/>
        </authorList>
    </citation>
    <scope>STRUCTURE BY ELECTRON MICROSCOPY (8.90 ANGSTROMS) IN COMPLEX WITH GROEL</scope>
</reference>
<reference evidence="30" key="38">
    <citation type="journal article" date="2014" name="J. Mol. Biol.">
        <title>Crystal structure of a symmetric football-shaped GroEL:GroES2-ATP14 complex determined at 3.8A reveals rearrangement between two GroEL rings.</title>
        <authorList>
            <person name="Koike-Takeshita A."/>
            <person name="Arakawa T."/>
            <person name="Taguchi H."/>
            <person name="Shimamura T."/>
        </authorList>
    </citation>
    <scope>X-RAY CRYSTALLOGRAPHY (3.79 ANGSTROMS) IN COMPLEX WITH GROEL</scope>
    <scope>SUBUNIT</scope>
</reference>
<reference evidence="34" key="39">
    <citation type="journal article" date="2018" name="Cell">
        <title>GroEL ring separation and exchange in the chaperonin reaction.</title>
        <authorList>
            <person name="Yan X."/>
            <person name="Shi Q."/>
            <person name="Bracher A."/>
            <person name="Milicic G."/>
            <person name="Singh A.K."/>
            <person name="Hartl F.U."/>
            <person name="Hayer-Hartl M."/>
        </authorList>
    </citation>
    <scope>X-RAY CRYSTALLOGRAPHY (3.64 ANGSTROMS) IN COMPLEX WITH GROEL</scope>
</reference>
<gene>
    <name evidence="1 24" type="primary">groES</name>
    <name type="synonym">groS</name>
    <name type="synonym">mopB</name>
    <name type="ordered locus">b4142</name>
    <name type="ordered locus">JW4102</name>
</gene>